<keyword id="KW-1003">Cell membrane</keyword>
<keyword id="KW-0472">Membrane</keyword>
<keyword id="KW-1185">Reference proteome</keyword>
<keyword id="KW-0812">Transmembrane</keyword>
<keyword id="KW-1133">Transmembrane helix</keyword>
<keyword id="KW-0843">Virulence</keyword>
<dbReference type="EMBL" id="BX571966">
    <property type="protein sequence ID" value="CAH39007.1"/>
    <property type="molecule type" value="Genomic_DNA"/>
</dbReference>
<dbReference type="RefSeq" id="WP_004525318.1">
    <property type="nucleotide sequence ID" value="NZ_CP009537.1"/>
</dbReference>
<dbReference type="RefSeq" id="YP_111540.1">
    <property type="nucleotide sequence ID" value="NC_006351.1"/>
</dbReference>
<dbReference type="SMR" id="Q63K32"/>
<dbReference type="STRING" id="272560.BPSS1534"/>
<dbReference type="MEROPS" id="N06.002"/>
<dbReference type="KEGG" id="bps:BPSS1534"/>
<dbReference type="PATRIC" id="fig|272560.51.peg.4889"/>
<dbReference type="eggNOG" id="COG1377">
    <property type="taxonomic scope" value="Bacteria"/>
</dbReference>
<dbReference type="PHI-base" id="PHI:5324"/>
<dbReference type="Proteomes" id="UP000000605">
    <property type="component" value="Chromosome 2"/>
</dbReference>
<dbReference type="GO" id="GO:0005886">
    <property type="term" value="C:plasma membrane"/>
    <property type="evidence" value="ECO:0007669"/>
    <property type="project" value="UniProtKB-SubCell"/>
</dbReference>
<dbReference type="GO" id="GO:0009306">
    <property type="term" value="P:protein secretion"/>
    <property type="evidence" value="ECO:0007669"/>
    <property type="project" value="InterPro"/>
</dbReference>
<dbReference type="Gene3D" id="6.10.250.2080">
    <property type="match status" value="1"/>
</dbReference>
<dbReference type="Gene3D" id="3.40.1690.10">
    <property type="entry name" value="secretion proteins EscU"/>
    <property type="match status" value="1"/>
</dbReference>
<dbReference type="InterPro" id="IPR006307">
    <property type="entry name" value="BsaZ-like"/>
</dbReference>
<dbReference type="InterPro" id="IPR006135">
    <property type="entry name" value="T3SS_substrate_exporter"/>
</dbReference>
<dbReference type="InterPro" id="IPR029025">
    <property type="entry name" value="T3SS_substrate_exporter_C"/>
</dbReference>
<dbReference type="NCBIfam" id="TIGR01404">
    <property type="entry name" value="FlhB_rel_III"/>
    <property type="match status" value="1"/>
</dbReference>
<dbReference type="NCBIfam" id="NF006017">
    <property type="entry name" value="PRK08156.1"/>
    <property type="match status" value="1"/>
</dbReference>
<dbReference type="PANTHER" id="PTHR30531">
    <property type="entry name" value="FLAGELLAR BIOSYNTHETIC PROTEIN FLHB"/>
    <property type="match status" value="1"/>
</dbReference>
<dbReference type="PANTHER" id="PTHR30531:SF14">
    <property type="entry name" value="SURFACE PRESENTATION OF ANTIGENS PROTEIN SPAS"/>
    <property type="match status" value="1"/>
</dbReference>
<dbReference type="Pfam" id="PF01312">
    <property type="entry name" value="Bac_export_2"/>
    <property type="match status" value="1"/>
</dbReference>
<dbReference type="PRINTS" id="PR00950">
    <property type="entry name" value="TYPE3IMSPROT"/>
</dbReference>
<dbReference type="SUPFAM" id="SSF160544">
    <property type="entry name" value="EscU C-terminal domain-like"/>
    <property type="match status" value="1"/>
</dbReference>
<sequence length="411" mass="44458">MAEKTEKPTAKKLRDAAKKGQTFKARDIVALIVIATGALAAPALVDLTRIAAEFVRIASTGAQPNPGAYAFAWAKLFLRIAAPFVLLCAAAGALPSLVQSRFTLAVESIRFDLTALDPVKGMKRLFSWRSAKDAVKALLYVGVFALTVRVFADLYHADVFGLFRARPALLGHMWIVLTVRLVLLFLLCALPVLILDAAVEYFLYHRELKMDKHEVKQEYKESEGNHEIKSKRREIHQELLSEEIKANVEQSDFIVANPTHIAIGVYVNPDIVPIPFVSVRETNARALAVIRHAEACGVPVVRNVALARSIYRNSPRRYSFVSHDDIDGVMRVLIWLGEVEAANRGGPPPETRAPTSAEPQARDGVAPPGDACADNAFPDDAPPGAAAPNAGSPDGPAPDGGAPARTGDQNA</sequence>
<accession>Q63K32</accession>
<proteinExistence type="inferred from homology"/>
<organism>
    <name type="scientific">Burkholderia pseudomallei (strain K96243)</name>
    <dbReference type="NCBI Taxonomy" id="272560"/>
    <lineage>
        <taxon>Bacteria</taxon>
        <taxon>Pseudomonadati</taxon>
        <taxon>Pseudomonadota</taxon>
        <taxon>Betaproteobacteria</taxon>
        <taxon>Burkholderiales</taxon>
        <taxon>Burkholderiaceae</taxon>
        <taxon>Burkholderia</taxon>
        <taxon>pseudomallei group</taxon>
    </lineage>
</organism>
<name>BSAZ_BURPS</name>
<protein>
    <recommendedName>
        <fullName>Secretion apparatus protein BsaZ</fullName>
    </recommendedName>
</protein>
<reference key="1">
    <citation type="journal article" date="2004" name="Proc. Natl. Acad. Sci. U.S.A.">
        <title>Genomic plasticity of the causative agent of melioidosis, Burkholderia pseudomallei.</title>
        <authorList>
            <person name="Holden M.T.G."/>
            <person name="Titball R.W."/>
            <person name="Peacock S.J."/>
            <person name="Cerdeno-Tarraga A.-M."/>
            <person name="Atkins T."/>
            <person name="Crossman L.C."/>
            <person name="Pitt T."/>
            <person name="Churcher C."/>
            <person name="Mungall K.L."/>
            <person name="Bentley S.D."/>
            <person name="Sebaihia M."/>
            <person name="Thomson N.R."/>
            <person name="Bason N."/>
            <person name="Beacham I.R."/>
            <person name="Brooks K."/>
            <person name="Brown K.A."/>
            <person name="Brown N.F."/>
            <person name="Challis G.L."/>
            <person name="Cherevach I."/>
            <person name="Chillingworth T."/>
            <person name="Cronin A."/>
            <person name="Crossett B."/>
            <person name="Davis P."/>
            <person name="DeShazer D."/>
            <person name="Feltwell T."/>
            <person name="Fraser A."/>
            <person name="Hance Z."/>
            <person name="Hauser H."/>
            <person name="Holroyd S."/>
            <person name="Jagels K."/>
            <person name="Keith K.E."/>
            <person name="Maddison M."/>
            <person name="Moule S."/>
            <person name="Price C."/>
            <person name="Quail M.A."/>
            <person name="Rabbinowitsch E."/>
            <person name="Rutherford K."/>
            <person name="Sanders M."/>
            <person name="Simmonds M."/>
            <person name="Songsivilai S."/>
            <person name="Stevens K."/>
            <person name="Tumapa S."/>
            <person name="Vesaratchavest M."/>
            <person name="Whitehead S."/>
            <person name="Yeats C."/>
            <person name="Barrell B.G."/>
            <person name="Oyston P.C.F."/>
            <person name="Parkhill J."/>
        </authorList>
    </citation>
    <scope>NUCLEOTIDE SEQUENCE [LARGE SCALE GENOMIC DNA]</scope>
    <source>
        <strain>K96243</strain>
    </source>
</reference>
<reference key="2">
    <citation type="journal article" date="2002" name="Mol. Microbiol.">
        <title>An Inv/Mxi-Spa-like type III protein secretion system in Burkholderia pseudomallei modulates intracellular behaviour of the pathogen.</title>
        <authorList>
            <person name="Stevens M.P."/>
            <person name="Wood M.W."/>
            <person name="Taylor L.A."/>
            <person name="Monaghan P."/>
            <person name="Hawes P."/>
            <person name="Jones P.W."/>
            <person name="Wallis T.S."/>
            <person name="Galyov E.E."/>
        </authorList>
    </citation>
    <scope>ROLE IN LYSIS OF HOST VACUOLES</scope>
    <source>
        <strain>10276</strain>
    </source>
</reference>
<comment type="function">
    <text evidence="3">Part of the bsa type III secretion system, is involved in the intracellular replication of invading bacteria inside the host cell. Probably necessary for the lysis of the vacuole membrane and escape into the host cell cytoplasm.</text>
</comment>
<comment type="subcellular location">
    <subcellularLocation>
        <location evidence="4">Cell membrane</location>
        <topology evidence="4">Multi-pass membrane protein</topology>
    </subcellularLocation>
</comment>
<comment type="similarity">
    <text evidence="4">Belongs to the type III secretion exporter family.</text>
</comment>
<gene>
    <name type="primary">bsaZ</name>
    <name type="ordered locus">BPSS1534</name>
</gene>
<evidence type="ECO:0000255" key="1"/>
<evidence type="ECO:0000256" key="2">
    <source>
        <dbReference type="SAM" id="MobiDB-lite"/>
    </source>
</evidence>
<evidence type="ECO:0000269" key="3">
    <source>
    </source>
</evidence>
<evidence type="ECO:0000305" key="4"/>
<feature type="chain" id="PRO_0000344011" description="Secretion apparatus protein BsaZ">
    <location>
        <begin position="1"/>
        <end position="411"/>
    </location>
</feature>
<feature type="transmembrane region" description="Helical" evidence="1">
    <location>
        <begin position="28"/>
        <end position="48"/>
    </location>
</feature>
<feature type="transmembrane region" description="Helical" evidence="1">
    <location>
        <begin position="80"/>
        <end position="100"/>
    </location>
</feature>
<feature type="transmembrane region" description="Helical" evidence="1">
    <location>
        <begin position="137"/>
        <end position="157"/>
    </location>
</feature>
<feature type="transmembrane region" description="Helical" evidence="1">
    <location>
        <begin position="175"/>
        <end position="195"/>
    </location>
</feature>
<feature type="region of interest" description="Disordered" evidence="2">
    <location>
        <begin position="341"/>
        <end position="411"/>
    </location>
</feature>
<feature type="compositionally biased region" description="Low complexity" evidence="2">
    <location>
        <begin position="370"/>
        <end position="404"/>
    </location>
</feature>